<name>PANC_BACMK</name>
<proteinExistence type="inferred from homology"/>
<feature type="chain" id="PRO_1000097030" description="Pantothenate synthetase">
    <location>
        <begin position="1"/>
        <end position="282"/>
    </location>
</feature>
<feature type="active site" description="Proton donor" evidence="1">
    <location>
        <position position="37"/>
    </location>
</feature>
<feature type="binding site" evidence="1">
    <location>
        <begin position="30"/>
        <end position="37"/>
    </location>
    <ligand>
        <name>ATP</name>
        <dbReference type="ChEBI" id="CHEBI:30616"/>
    </ligand>
</feature>
<feature type="binding site" evidence="1">
    <location>
        <position position="61"/>
    </location>
    <ligand>
        <name>(R)-pantoate</name>
        <dbReference type="ChEBI" id="CHEBI:15980"/>
    </ligand>
</feature>
<feature type="binding site" evidence="1">
    <location>
        <position position="61"/>
    </location>
    <ligand>
        <name>beta-alanine</name>
        <dbReference type="ChEBI" id="CHEBI:57966"/>
    </ligand>
</feature>
<feature type="binding site" evidence="1">
    <location>
        <begin position="147"/>
        <end position="150"/>
    </location>
    <ligand>
        <name>ATP</name>
        <dbReference type="ChEBI" id="CHEBI:30616"/>
    </ligand>
</feature>
<feature type="binding site" evidence="1">
    <location>
        <position position="153"/>
    </location>
    <ligand>
        <name>(R)-pantoate</name>
        <dbReference type="ChEBI" id="CHEBI:15980"/>
    </ligand>
</feature>
<feature type="binding site" evidence="1">
    <location>
        <position position="176"/>
    </location>
    <ligand>
        <name>ATP</name>
        <dbReference type="ChEBI" id="CHEBI:30616"/>
    </ligand>
</feature>
<feature type="binding site" evidence="1">
    <location>
        <begin position="184"/>
        <end position="187"/>
    </location>
    <ligand>
        <name>ATP</name>
        <dbReference type="ChEBI" id="CHEBI:30616"/>
    </ligand>
</feature>
<accession>A9VMF0</accession>
<reference key="1">
    <citation type="journal article" date="2008" name="Chem. Biol. Interact.">
        <title>Extending the Bacillus cereus group genomics to putative food-borne pathogens of different toxicity.</title>
        <authorList>
            <person name="Lapidus A."/>
            <person name="Goltsman E."/>
            <person name="Auger S."/>
            <person name="Galleron N."/>
            <person name="Segurens B."/>
            <person name="Dossat C."/>
            <person name="Land M.L."/>
            <person name="Broussolle V."/>
            <person name="Brillard J."/>
            <person name="Guinebretiere M.-H."/>
            <person name="Sanchis V."/>
            <person name="Nguen-the C."/>
            <person name="Lereclus D."/>
            <person name="Richardson P."/>
            <person name="Wincker P."/>
            <person name="Weissenbach J."/>
            <person name="Ehrlich S.D."/>
            <person name="Sorokin A."/>
        </authorList>
    </citation>
    <scope>NUCLEOTIDE SEQUENCE [LARGE SCALE GENOMIC DNA]</scope>
    <source>
        <strain>KBAB4</strain>
    </source>
</reference>
<comment type="function">
    <text evidence="1">Catalyzes the condensation of pantoate with beta-alanine in an ATP-dependent reaction via a pantoyl-adenylate intermediate.</text>
</comment>
<comment type="catalytic activity">
    <reaction evidence="1">
        <text>(R)-pantoate + beta-alanine + ATP = (R)-pantothenate + AMP + diphosphate + H(+)</text>
        <dbReference type="Rhea" id="RHEA:10912"/>
        <dbReference type="ChEBI" id="CHEBI:15378"/>
        <dbReference type="ChEBI" id="CHEBI:15980"/>
        <dbReference type="ChEBI" id="CHEBI:29032"/>
        <dbReference type="ChEBI" id="CHEBI:30616"/>
        <dbReference type="ChEBI" id="CHEBI:33019"/>
        <dbReference type="ChEBI" id="CHEBI:57966"/>
        <dbReference type="ChEBI" id="CHEBI:456215"/>
        <dbReference type="EC" id="6.3.2.1"/>
    </reaction>
</comment>
<comment type="pathway">
    <text evidence="1">Cofactor biosynthesis; (R)-pantothenate biosynthesis; (R)-pantothenate from (R)-pantoate and beta-alanine: step 1/1.</text>
</comment>
<comment type="subunit">
    <text evidence="1">Homodimer.</text>
</comment>
<comment type="subcellular location">
    <subcellularLocation>
        <location evidence="1">Cytoplasm</location>
    </subcellularLocation>
</comment>
<comment type="miscellaneous">
    <text evidence="1">The reaction proceeds by a bi uni uni bi ping pong mechanism.</text>
</comment>
<comment type="similarity">
    <text evidence="1">Belongs to the pantothenate synthetase family.</text>
</comment>
<sequence>MKIITTVQEMQQITNELHASGKSIGFVPTMGYLHEGHATLLRKAREENEIVVLSVFVNPLQFGPNEDLDRYPRDIDRDENVAKENGVDYLFYPSVEEMYPAEQTTTVEVVKRTDVLCGKQRPGHFAGVATVLMKLFNITLPTRAYFGMKDAQQVAVIEGFVTDFNIPVTIVPVDIVREEDGLAKSSRNVYLSLEEREEAPHLYGSLCIAKERIEAGERNPEIIMNLVKEHIEKYTKGTVDYADLYAYPSLKAINKIEGRIILAIAVKFENVRLIDNITLMGK</sequence>
<keyword id="KW-0067">ATP-binding</keyword>
<keyword id="KW-0963">Cytoplasm</keyword>
<keyword id="KW-0436">Ligase</keyword>
<keyword id="KW-0547">Nucleotide-binding</keyword>
<keyword id="KW-0566">Pantothenate biosynthesis</keyword>
<protein>
    <recommendedName>
        <fullName evidence="1">Pantothenate synthetase</fullName>
        <shortName evidence="1">PS</shortName>
        <ecNumber evidence="1">6.3.2.1</ecNumber>
    </recommendedName>
    <alternativeName>
        <fullName evidence="1">Pantoate--beta-alanine ligase</fullName>
    </alternativeName>
    <alternativeName>
        <fullName evidence="1">Pantoate-activating enzyme</fullName>
    </alternativeName>
</protein>
<evidence type="ECO:0000255" key="1">
    <source>
        <dbReference type="HAMAP-Rule" id="MF_00158"/>
    </source>
</evidence>
<gene>
    <name evidence="1" type="primary">panC</name>
    <name type="ordered locus">BcerKBAB4_1465</name>
</gene>
<dbReference type="EC" id="6.3.2.1" evidence="1"/>
<dbReference type="EMBL" id="CP000903">
    <property type="protein sequence ID" value="ABY42712.1"/>
    <property type="molecule type" value="Genomic_DNA"/>
</dbReference>
<dbReference type="RefSeq" id="WP_002086591.1">
    <property type="nucleotide sequence ID" value="NC_010184.1"/>
</dbReference>
<dbReference type="SMR" id="A9VMF0"/>
<dbReference type="KEGG" id="bwe:BcerKBAB4_1465"/>
<dbReference type="eggNOG" id="COG0414">
    <property type="taxonomic scope" value="Bacteria"/>
</dbReference>
<dbReference type="HOGENOM" id="CLU_047148_0_0_9"/>
<dbReference type="UniPathway" id="UPA00028">
    <property type="reaction ID" value="UER00005"/>
</dbReference>
<dbReference type="Proteomes" id="UP000002154">
    <property type="component" value="Chromosome"/>
</dbReference>
<dbReference type="GO" id="GO:0005829">
    <property type="term" value="C:cytosol"/>
    <property type="evidence" value="ECO:0007669"/>
    <property type="project" value="TreeGrafter"/>
</dbReference>
<dbReference type="GO" id="GO:0005524">
    <property type="term" value="F:ATP binding"/>
    <property type="evidence" value="ECO:0007669"/>
    <property type="project" value="UniProtKB-KW"/>
</dbReference>
<dbReference type="GO" id="GO:0004592">
    <property type="term" value="F:pantoate-beta-alanine ligase activity"/>
    <property type="evidence" value="ECO:0007669"/>
    <property type="project" value="UniProtKB-UniRule"/>
</dbReference>
<dbReference type="GO" id="GO:0015940">
    <property type="term" value="P:pantothenate biosynthetic process"/>
    <property type="evidence" value="ECO:0007669"/>
    <property type="project" value="UniProtKB-UniRule"/>
</dbReference>
<dbReference type="CDD" id="cd00560">
    <property type="entry name" value="PanC"/>
    <property type="match status" value="1"/>
</dbReference>
<dbReference type="FunFam" id="3.30.1300.10:FF:000001">
    <property type="entry name" value="Pantothenate synthetase"/>
    <property type="match status" value="1"/>
</dbReference>
<dbReference type="FunFam" id="3.40.50.620:FF:000013">
    <property type="entry name" value="Pantothenate synthetase"/>
    <property type="match status" value="1"/>
</dbReference>
<dbReference type="Gene3D" id="3.40.50.620">
    <property type="entry name" value="HUPs"/>
    <property type="match status" value="1"/>
</dbReference>
<dbReference type="Gene3D" id="3.30.1300.10">
    <property type="entry name" value="Pantoate-beta-alanine ligase, C-terminal domain"/>
    <property type="match status" value="1"/>
</dbReference>
<dbReference type="HAMAP" id="MF_00158">
    <property type="entry name" value="PanC"/>
    <property type="match status" value="1"/>
</dbReference>
<dbReference type="InterPro" id="IPR004821">
    <property type="entry name" value="Cyt_trans-like"/>
</dbReference>
<dbReference type="InterPro" id="IPR003721">
    <property type="entry name" value="Pantoate_ligase"/>
</dbReference>
<dbReference type="InterPro" id="IPR042176">
    <property type="entry name" value="Pantoate_ligase_C"/>
</dbReference>
<dbReference type="InterPro" id="IPR014729">
    <property type="entry name" value="Rossmann-like_a/b/a_fold"/>
</dbReference>
<dbReference type="NCBIfam" id="TIGR00125">
    <property type="entry name" value="cyt_tran_rel"/>
    <property type="match status" value="1"/>
</dbReference>
<dbReference type="NCBIfam" id="TIGR00018">
    <property type="entry name" value="panC"/>
    <property type="match status" value="1"/>
</dbReference>
<dbReference type="PANTHER" id="PTHR21299">
    <property type="entry name" value="CYTIDYLATE KINASE/PANTOATE-BETA-ALANINE LIGASE"/>
    <property type="match status" value="1"/>
</dbReference>
<dbReference type="PANTHER" id="PTHR21299:SF1">
    <property type="entry name" value="PANTOATE--BETA-ALANINE LIGASE"/>
    <property type="match status" value="1"/>
</dbReference>
<dbReference type="Pfam" id="PF02569">
    <property type="entry name" value="Pantoate_ligase"/>
    <property type="match status" value="1"/>
</dbReference>
<dbReference type="SUPFAM" id="SSF52374">
    <property type="entry name" value="Nucleotidylyl transferase"/>
    <property type="match status" value="1"/>
</dbReference>
<organism>
    <name type="scientific">Bacillus mycoides (strain KBAB4)</name>
    <name type="common">Bacillus weihenstephanensis</name>
    <dbReference type="NCBI Taxonomy" id="315730"/>
    <lineage>
        <taxon>Bacteria</taxon>
        <taxon>Bacillati</taxon>
        <taxon>Bacillota</taxon>
        <taxon>Bacilli</taxon>
        <taxon>Bacillales</taxon>
        <taxon>Bacillaceae</taxon>
        <taxon>Bacillus</taxon>
        <taxon>Bacillus cereus group</taxon>
    </lineage>
</organism>